<accession>O24562</accession>
<accession>O64408</accession>
<proteinExistence type="evidence at protein level"/>
<keyword id="KW-0438">Lignin biosynthesis</keyword>
<keyword id="KW-0479">Metal-binding</keyword>
<keyword id="KW-0521">NADP</keyword>
<keyword id="KW-0560">Oxidoreductase</keyword>
<keyword id="KW-1185">Reference proteome</keyword>
<keyword id="KW-0862">Zinc</keyword>
<reference key="1">
    <citation type="submission" date="1997-07" db="EMBL/GenBank/DDBJ databases">
        <authorList>
            <person name="Civardi L."/>
            <person name="Tatout P."/>
            <person name="Murigneux A."/>
            <person name="Puigdomenech P."/>
            <person name="Rigau J."/>
        </authorList>
    </citation>
    <scope>NUCLEOTIDE SEQUENCE [MRNA]</scope>
    <source>
        <strain>cv. Wisconsin 64A</strain>
    </source>
</reference>
<reference key="2">
    <citation type="journal article" date="1998" name="Plant J.">
        <title>Brown-midrib maize (bm1) -- a mutation affecting the cinnamyl alcohol dehydrogenase gene.</title>
        <authorList>
            <person name="Halpin C."/>
            <person name="Holt K."/>
            <person name="Chojecki J."/>
            <person name="Oliver D."/>
            <person name="Chabbert B."/>
            <person name="Monties B."/>
            <person name="Edwards K."/>
            <person name="Barakate A."/>
            <person name="Foxon G.A."/>
        </authorList>
    </citation>
    <scope>NUCLEOTIDE SEQUENCE [MRNA]</scope>
    <scope>FUNCTION</scope>
    <scope>DISRUPTION PHENOTYPE</scope>
    <scope>CATALYTIC ACTIVITY</scope>
    <scope>PATHWAY</scope>
    <source>
        <strain>cv. UE95</strain>
    </source>
</reference>
<sequence>MGSLASERKVVGWAARDATGHLSPYSYTLRNTGPEDVVVKVLYCGICHTDIHQAKNHLGASKYPMVPGHEVVGEVVEVGPEVAKYGVGDVVGVGVIVGCCRECSPCKANVEQYCNKKIWSYNDVYTDGRPTQGGFASTMVVDQKFVVKIPAGLAPEQAAPLLCAGVTVYSPLKHFGLTNPGLRGGILGLGGVGHMGVKVAKAMGHHVTVISSSSKKRAEAMDHLGADAYLVSSDAAAMAAAADSLDYIIDTVPVHHPLEPYLALLKLDGKLVLLGVIGEPLSFVSPMVMLGRKAITGSFIGSIDETAEVLQFCVDKGLTSQIEVVKMGYVNEALERLERNDVRYRFVVDVAGSNVEAEAAAADAASN</sequence>
<evidence type="ECO:0000250" key="1">
    <source>
        <dbReference type="UniProtKB" id="O49482"/>
    </source>
</evidence>
<evidence type="ECO:0000269" key="2">
    <source>
    </source>
</evidence>
<evidence type="ECO:0000303" key="3">
    <source>
    </source>
</evidence>
<evidence type="ECO:0000303" key="4">
    <source ref="1"/>
</evidence>
<evidence type="ECO:0000305" key="5"/>
<name>CADH_MAIZE</name>
<protein>
    <recommendedName>
        <fullName evidence="3 4">Probable cinnamyl alcohol dehydrogenase</fullName>
        <shortName evidence="3 4">CAD</shortName>
        <ecNumber evidence="2">1.1.1.195</ecNumber>
    </recommendedName>
    <alternativeName>
        <fullName evidence="3">Brown-midrib 1 protein</fullName>
    </alternativeName>
</protein>
<gene>
    <name evidence="3 4" type="primary">CAD</name>
    <name evidence="3" type="synonym">BM1</name>
</gene>
<feature type="chain" id="PRO_0000160797" description="Probable cinnamyl alcohol dehydrogenase">
    <location>
        <begin position="1"/>
        <end position="367"/>
    </location>
</feature>
<feature type="binding site" evidence="1">
    <location>
        <position position="47"/>
    </location>
    <ligand>
        <name>Zn(2+)</name>
        <dbReference type="ChEBI" id="CHEBI:29105"/>
        <label>1</label>
        <note>catalytic</note>
    </ligand>
</feature>
<feature type="binding site" evidence="1">
    <location>
        <position position="49"/>
    </location>
    <ligand>
        <name>NADP(+)</name>
        <dbReference type="ChEBI" id="CHEBI:58349"/>
    </ligand>
</feature>
<feature type="binding site" evidence="1">
    <location>
        <position position="69"/>
    </location>
    <ligand>
        <name>Zn(2+)</name>
        <dbReference type="ChEBI" id="CHEBI:29105"/>
        <label>1</label>
        <note>catalytic</note>
    </ligand>
</feature>
<feature type="binding site" evidence="1">
    <location>
        <position position="70"/>
    </location>
    <ligand>
        <name>Zn(2+)</name>
        <dbReference type="ChEBI" id="CHEBI:29105"/>
        <label>1</label>
        <note>catalytic</note>
    </ligand>
</feature>
<feature type="binding site" evidence="1">
    <location>
        <position position="100"/>
    </location>
    <ligand>
        <name>Zn(2+)</name>
        <dbReference type="ChEBI" id="CHEBI:29105"/>
        <label>2</label>
    </ligand>
</feature>
<feature type="binding site" evidence="1">
    <location>
        <position position="103"/>
    </location>
    <ligand>
        <name>Zn(2+)</name>
        <dbReference type="ChEBI" id="CHEBI:29105"/>
        <label>2</label>
    </ligand>
</feature>
<feature type="binding site" evidence="1">
    <location>
        <position position="106"/>
    </location>
    <ligand>
        <name>Zn(2+)</name>
        <dbReference type="ChEBI" id="CHEBI:29105"/>
        <label>2</label>
    </ligand>
</feature>
<feature type="binding site" evidence="1">
    <location>
        <position position="114"/>
    </location>
    <ligand>
        <name>Zn(2+)</name>
        <dbReference type="ChEBI" id="CHEBI:29105"/>
        <label>2</label>
    </ligand>
</feature>
<feature type="binding site" evidence="1">
    <location>
        <position position="163"/>
    </location>
    <ligand>
        <name>Zn(2+)</name>
        <dbReference type="ChEBI" id="CHEBI:29105"/>
        <label>1</label>
        <note>catalytic</note>
    </ligand>
</feature>
<feature type="binding site" evidence="1">
    <location>
        <position position="167"/>
    </location>
    <ligand>
        <name>NADP(+)</name>
        <dbReference type="ChEBI" id="CHEBI:58349"/>
    </ligand>
</feature>
<feature type="binding site" evidence="1">
    <location>
        <begin position="188"/>
        <end position="193"/>
    </location>
    <ligand>
        <name>NADP(+)</name>
        <dbReference type="ChEBI" id="CHEBI:58349"/>
    </ligand>
</feature>
<feature type="binding site" evidence="1">
    <location>
        <begin position="211"/>
        <end position="216"/>
    </location>
    <ligand>
        <name>NADP(+)</name>
        <dbReference type="ChEBI" id="CHEBI:58349"/>
    </ligand>
</feature>
<feature type="binding site" evidence="1">
    <location>
        <position position="251"/>
    </location>
    <ligand>
        <name>NADP(+)</name>
        <dbReference type="ChEBI" id="CHEBI:58349"/>
    </ligand>
</feature>
<feature type="binding site" evidence="1">
    <location>
        <position position="275"/>
    </location>
    <ligand>
        <name>NADP(+)</name>
        <dbReference type="ChEBI" id="CHEBI:58349"/>
    </ligand>
</feature>
<feature type="binding site" evidence="1">
    <location>
        <begin position="298"/>
        <end position="300"/>
    </location>
    <ligand>
        <name>NADP(+)</name>
        <dbReference type="ChEBI" id="CHEBI:58349"/>
    </ligand>
</feature>
<feature type="sequence conflict" description="In Ref. 2; CAA06687." evidence="5" ref="2">
    <original>N</original>
    <variation>T</variation>
    <location>
        <position position="179"/>
    </location>
</feature>
<feature type="sequence conflict" description="In Ref. 2; CAA06687." evidence="5" ref="2">
    <original>AA</original>
    <variation>GP</variation>
    <location>
        <begin position="239"/>
        <end position="240"/>
    </location>
</feature>
<organism>
    <name type="scientific">Zea mays</name>
    <name type="common">Maize</name>
    <dbReference type="NCBI Taxonomy" id="4577"/>
    <lineage>
        <taxon>Eukaryota</taxon>
        <taxon>Viridiplantae</taxon>
        <taxon>Streptophyta</taxon>
        <taxon>Embryophyta</taxon>
        <taxon>Tracheophyta</taxon>
        <taxon>Spermatophyta</taxon>
        <taxon>Magnoliopsida</taxon>
        <taxon>Liliopsida</taxon>
        <taxon>Poales</taxon>
        <taxon>Poaceae</taxon>
        <taxon>PACMAD clade</taxon>
        <taxon>Panicoideae</taxon>
        <taxon>Andropogonodae</taxon>
        <taxon>Andropogoneae</taxon>
        <taxon>Tripsacinae</taxon>
        <taxon>Zea</taxon>
    </lineage>
</organism>
<dbReference type="EC" id="1.1.1.195" evidence="2"/>
<dbReference type="EMBL" id="Y13733">
    <property type="protein sequence ID" value="CAA74070.1"/>
    <property type="molecule type" value="mRNA"/>
</dbReference>
<dbReference type="EMBL" id="AJ005702">
    <property type="protein sequence ID" value="CAA06687.1"/>
    <property type="molecule type" value="mRNA"/>
</dbReference>
<dbReference type="PIR" id="T02767">
    <property type="entry name" value="T02767"/>
</dbReference>
<dbReference type="PIR" id="T02990">
    <property type="entry name" value="T02990"/>
</dbReference>
<dbReference type="RefSeq" id="NP_001105654.1">
    <property type="nucleotide sequence ID" value="NM_001112184.1"/>
</dbReference>
<dbReference type="SMR" id="O24562"/>
<dbReference type="FunCoup" id="O24562">
    <property type="interactions" value="775"/>
</dbReference>
<dbReference type="STRING" id="4577.O24562"/>
<dbReference type="PaxDb" id="4577-GRMZM5G844562_P01"/>
<dbReference type="GeneID" id="542663"/>
<dbReference type="KEGG" id="zma:542663"/>
<dbReference type="MaizeGDB" id="13856"/>
<dbReference type="eggNOG" id="KOG0023">
    <property type="taxonomic scope" value="Eukaryota"/>
</dbReference>
<dbReference type="InParanoid" id="O24562"/>
<dbReference type="OrthoDB" id="1879366at2759"/>
<dbReference type="UniPathway" id="UPA00711"/>
<dbReference type="Proteomes" id="UP000007305">
    <property type="component" value="Unplaced"/>
</dbReference>
<dbReference type="ExpressionAtlas" id="O24562">
    <property type="expression patterns" value="baseline and differential"/>
</dbReference>
<dbReference type="GO" id="GO:0045551">
    <property type="term" value="F:cinnamyl-alcohol dehydrogenase activity"/>
    <property type="evidence" value="ECO:0000315"/>
    <property type="project" value="UniProtKB"/>
</dbReference>
<dbReference type="GO" id="GO:0050268">
    <property type="term" value="F:coniferyl-alcohol dehydrogenase activity"/>
    <property type="evidence" value="ECO:0007669"/>
    <property type="project" value="RHEA"/>
</dbReference>
<dbReference type="GO" id="GO:0008270">
    <property type="term" value="F:zinc ion binding"/>
    <property type="evidence" value="ECO:0007669"/>
    <property type="project" value="InterPro"/>
</dbReference>
<dbReference type="GO" id="GO:0009809">
    <property type="term" value="P:lignin biosynthetic process"/>
    <property type="evidence" value="ECO:0000315"/>
    <property type="project" value="UniProtKB"/>
</dbReference>
<dbReference type="CDD" id="cd05283">
    <property type="entry name" value="CAD1"/>
    <property type="match status" value="1"/>
</dbReference>
<dbReference type="FunFam" id="3.40.50.720:FF:000022">
    <property type="entry name" value="Cinnamyl alcohol dehydrogenase"/>
    <property type="match status" value="1"/>
</dbReference>
<dbReference type="FunFam" id="3.90.180.10:FF:000004">
    <property type="entry name" value="probable cinnamyl alcohol dehydrogenase"/>
    <property type="match status" value="1"/>
</dbReference>
<dbReference type="FunFam" id="3.90.180.10:FF:000100">
    <property type="entry name" value="Putative cinnamyl alcohol dehydrogenase 6"/>
    <property type="match status" value="1"/>
</dbReference>
<dbReference type="Gene3D" id="3.90.180.10">
    <property type="entry name" value="Medium-chain alcohol dehydrogenases, catalytic domain"/>
    <property type="match status" value="1"/>
</dbReference>
<dbReference type="Gene3D" id="3.40.50.720">
    <property type="entry name" value="NAD(P)-binding Rossmann-like Domain"/>
    <property type="match status" value="1"/>
</dbReference>
<dbReference type="InterPro" id="IPR013149">
    <property type="entry name" value="ADH-like_C"/>
</dbReference>
<dbReference type="InterPro" id="IPR013154">
    <property type="entry name" value="ADH-like_N"/>
</dbReference>
<dbReference type="InterPro" id="IPR002328">
    <property type="entry name" value="ADH_Zn_CS"/>
</dbReference>
<dbReference type="InterPro" id="IPR047109">
    <property type="entry name" value="CAD-like"/>
</dbReference>
<dbReference type="InterPro" id="IPR011032">
    <property type="entry name" value="GroES-like_sf"/>
</dbReference>
<dbReference type="InterPro" id="IPR036291">
    <property type="entry name" value="NAD(P)-bd_dom_sf"/>
</dbReference>
<dbReference type="InterPro" id="IPR020843">
    <property type="entry name" value="PKS_ER"/>
</dbReference>
<dbReference type="PANTHER" id="PTHR42683">
    <property type="entry name" value="ALDEHYDE REDUCTASE"/>
    <property type="match status" value="1"/>
</dbReference>
<dbReference type="Pfam" id="PF08240">
    <property type="entry name" value="ADH_N"/>
    <property type="match status" value="1"/>
</dbReference>
<dbReference type="Pfam" id="PF00107">
    <property type="entry name" value="ADH_zinc_N"/>
    <property type="match status" value="1"/>
</dbReference>
<dbReference type="SMART" id="SM00829">
    <property type="entry name" value="PKS_ER"/>
    <property type="match status" value="1"/>
</dbReference>
<dbReference type="SUPFAM" id="SSF50129">
    <property type="entry name" value="GroES-like"/>
    <property type="match status" value="1"/>
</dbReference>
<dbReference type="SUPFAM" id="SSF51735">
    <property type="entry name" value="NAD(P)-binding Rossmann-fold domains"/>
    <property type="match status" value="1"/>
</dbReference>
<dbReference type="PROSITE" id="PS00059">
    <property type="entry name" value="ADH_ZINC"/>
    <property type="match status" value="1"/>
</dbReference>
<comment type="function">
    <text evidence="2">Involved in lignin biosynthesis. May catalyze the final step specific for the production of lignin monomers, like coniferyl alcohol, sinapyl alcohol and 4-coumaryl alcohol.</text>
</comment>
<comment type="catalytic activity">
    <reaction evidence="2">
        <text>(E)-cinnamyl alcohol + NADP(+) = (E)-cinnamaldehyde + NADPH + H(+)</text>
        <dbReference type="Rhea" id="RHEA:10392"/>
        <dbReference type="ChEBI" id="CHEBI:15378"/>
        <dbReference type="ChEBI" id="CHEBI:16731"/>
        <dbReference type="ChEBI" id="CHEBI:33227"/>
        <dbReference type="ChEBI" id="CHEBI:57783"/>
        <dbReference type="ChEBI" id="CHEBI:58349"/>
        <dbReference type="EC" id="1.1.1.195"/>
    </reaction>
    <physiologicalReaction direction="right-to-left" evidence="2">
        <dbReference type="Rhea" id="RHEA:10394"/>
    </physiologicalReaction>
</comment>
<comment type="catalytic activity">
    <reaction evidence="2">
        <text>(E)-coniferol + NADP(+) = (E)-coniferaldehyde + NADPH + H(+)</text>
        <dbReference type="Rhea" id="RHEA:22444"/>
        <dbReference type="ChEBI" id="CHEBI:15378"/>
        <dbReference type="ChEBI" id="CHEBI:16547"/>
        <dbReference type="ChEBI" id="CHEBI:17745"/>
        <dbReference type="ChEBI" id="CHEBI:57783"/>
        <dbReference type="ChEBI" id="CHEBI:58349"/>
        <dbReference type="EC" id="1.1.1.195"/>
    </reaction>
    <physiologicalReaction direction="right-to-left" evidence="2">
        <dbReference type="Rhea" id="RHEA:22446"/>
    </physiologicalReaction>
</comment>
<comment type="catalytic activity">
    <reaction evidence="2">
        <text>(E)-sinapyl alcohol + NADP(+) = (E)-sinapaldehyde + NADPH + H(+)</text>
        <dbReference type="Rhea" id="RHEA:45704"/>
        <dbReference type="ChEBI" id="CHEBI:15378"/>
        <dbReference type="ChEBI" id="CHEBI:27949"/>
        <dbReference type="ChEBI" id="CHEBI:57783"/>
        <dbReference type="ChEBI" id="CHEBI:58349"/>
        <dbReference type="ChEBI" id="CHEBI:64557"/>
        <dbReference type="EC" id="1.1.1.195"/>
    </reaction>
    <physiologicalReaction direction="right-to-left" evidence="2">
        <dbReference type="Rhea" id="RHEA:45706"/>
    </physiologicalReaction>
</comment>
<comment type="catalytic activity">
    <reaction evidence="2">
        <text>(E)-4-coumaroyl alcohol + NADP(+) = (E)-4-coumaraldehyde + NADPH + H(+)</text>
        <dbReference type="Rhea" id="RHEA:45724"/>
        <dbReference type="ChEBI" id="CHEBI:15378"/>
        <dbReference type="ChEBI" id="CHEBI:28353"/>
        <dbReference type="ChEBI" id="CHEBI:57783"/>
        <dbReference type="ChEBI" id="CHEBI:58349"/>
        <dbReference type="ChEBI" id="CHEBI:64555"/>
        <dbReference type="EC" id="1.1.1.195"/>
    </reaction>
    <physiologicalReaction direction="right-to-left" evidence="2">
        <dbReference type="Rhea" id="RHEA:45726"/>
    </physiologicalReaction>
</comment>
<comment type="catalytic activity">
    <reaction evidence="2">
        <text>(E)-caffeyl alcohol + NADP(+) = (E)-caffeyl aldehyde + NADPH + H(+)</text>
        <dbReference type="Rhea" id="RHEA:45728"/>
        <dbReference type="ChEBI" id="CHEBI:15378"/>
        <dbReference type="ChEBI" id="CHEBI:28323"/>
        <dbReference type="ChEBI" id="CHEBI:31334"/>
        <dbReference type="ChEBI" id="CHEBI:57783"/>
        <dbReference type="ChEBI" id="CHEBI:58349"/>
    </reaction>
    <physiologicalReaction direction="right-to-left" evidence="2">
        <dbReference type="Rhea" id="RHEA:45730"/>
    </physiologicalReaction>
</comment>
<comment type="cofactor">
    <cofactor evidence="1">
        <name>Zn(2+)</name>
        <dbReference type="ChEBI" id="CHEBI:29105"/>
    </cofactor>
    <text evidence="1">Binds 2 Zn(2+) ions per subunit.</text>
</comment>
<comment type="pathway">
    <text evidence="2">Aromatic compound metabolism; phenylpropanoid biosynthesis.</text>
</comment>
<comment type="subunit">
    <text evidence="1">Homodimer.</text>
</comment>
<comment type="disruption phenotype">
    <text evidence="2">Reduced lignin content, and modified lignin of reddish-brown color.</text>
</comment>
<comment type="similarity">
    <text evidence="5">Belongs to the zinc-containing alcohol dehydrogenase family.</text>
</comment>